<accession>C5GY53</accession>
<protein>
    <recommendedName>
        <fullName>Mitochondrial zinc maintenance protein 1, mitochondrial</fullName>
    </recommendedName>
</protein>
<comment type="function">
    <text evidence="1">Assembly factor required for Rieske Fe-S protein RIP1 incorporation into the cytochrome b-c1 (CIII) complex. Functions as a chaperone, binding to this subunit within the mitochondrial matrix and stabilizing it prior to its translocation and insertion into the late CIII dimeric intermediate within the mitochondrial inner membrane. Modulates the mitochondrial matrix zinc pool (By similarity).</text>
</comment>
<comment type="subunit">
    <text evidence="1">Interacts with RIP1.</text>
</comment>
<comment type="subcellular location">
    <subcellularLocation>
        <location evidence="1">Mitochondrion matrix</location>
    </subcellularLocation>
</comment>
<comment type="similarity">
    <text evidence="3">Belongs to the complex I LYR family. MZM1 subfamily.</text>
</comment>
<proteinExistence type="inferred from homology"/>
<reference key="1">
    <citation type="journal article" date="2015" name="PLoS Genet.">
        <title>The dynamic genome and transcriptome of the human fungal pathogen Blastomyces and close relative Emmonsia.</title>
        <authorList>
            <person name="Munoz J.F."/>
            <person name="Gauthier G.M."/>
            <person name="Desjardins C.A."/>
            <person name="Gallo J.E."/>
            <person name="Holder J."/>
            <person name="Sullivan T.D."/>
            <person name="Marty A.J."/>
            <person name="Carmen J.C."/>
            <person name="Chen Z."/>
            <person name="Ding L."/>
            <person name="Gujja S."/>
            <person name="Magrini V."/>
            <person name="Misas E."/>
            <person name="Mitreva M."/>
            <person name="Priest M."/>
            <person name="Saif S."/>
            <person name="Whiston E.A."/>
            <person name="Young S."/>
            <person name="Zeng Q."/>
            <person name="Goldman W.E."/>
            <person name="Mardis E.R."/>
            <person name="Taylor J.W."/>
            <person name="McEwen J.G."/>
            <person name="Clay O.K."/>
            <person name="Klein B.S."/>
            <person name="Cuomo C.A."/>
        </authorList>
    </citation>
    <scope>NUCLEOTIDE SEQUENCE [LARGE SCALE GENOMIC DNA]</scope>
    <source>
        <strain>ER-3 / ATCC MYA-2586</strain>
    </source>
</reference>
<organism>
    <name type="scientific">Ajellomyces dermatitidis (strain ER-3 / ATCC MYA-2586)</name>
    <name type="common">Blastomyces dermatitidis</name>
    <dbReference type="NCBI Taxonomy" id="559297"/>
    <lineage>
        <taxon>Eukaryota</taxon>
        <taxon>Fungi</taxon>
        <taxon>Dikarya</taxon>
        <taxon>Ascomycota</taxon>
        <taxon>Pezizomycotina</taxon>
        <taxon>Eurotiomycetes</taxon>
        <taxon>Eurotiomycetidae</taxon>
        <taxon>Onygenales</taxon>
        <taxon>Ajellomycetaceae</taxon>
        <taxon>Blastomyces</taxon>
    </lineage>
</organism>
<keyword id="KW-0143">Chaperone</keyword>
<keyword id="KW-0496">Mitochondrion</keyword>
<keyword id="KW-0809">Transit peptide</keyword>
<gene>
    <name type="primary">MZM1</name>
    <name type="ORF">BDCG_09433</name>
</gene>
<dbReference type="EMBL" id="EQ999987">
    <property type="protein sequence ID" value="EEQ86164.1"/>
    <property type="molecule type" value="Genomic_DNA"/>
</dbReference>
<dbReference type="SMR" id="C5GY53"/>
<dbReference type="STRING" id="559297.C5GY53"/>
<dbReference type="VEuPathDB" id="FungiDB:BDCG_09433"/>
<dbReference type="HOGENOM" id="CLU_147114_2_2_1"/>
<dbReference type="OMA" id="KYKLRIH"/>
<dbReference type="GO" id="GO:0005759">
    <property type="term" value="C:mitochondrial matrix"/>
    <property type="evidence" value="ECO:0007669"/>
    <property type="project" value="UniProtKB-SubCell"/>
</dbReference>
<dbReference type="GO" id="GO:0044183">
    <property type="term" value="F:protein folding chaperone"/>
    <property type="evidence" value="ECO:0007669"/>
    <property type="project" value="TreeGrafter"/>
</dbReference>
<dbReference type="GO" id="GO:0034551">
    <property type="term" value="P:mitochondrial respiratory chain complex III assembly"/>
    <property type="evidence" value="ECO:0007669"/>
    <property type="project" value="InterPro"/>
</dbReference>
<dbReference type="CDD" id="cd20267">
    <property type="entry name" value="Complex1_LYR_LYRM7"/>
    <property type="match status" value="1"/>
</dbReference>
<dbReference type="InterPro" id="IPR045298">
    <property type="entry name" value="Complex1_LYR_LYRM7"/>
</dbReference>
<dbReference type="InterPro" id="IPR050435">
    <property type="entry name" value="MZM1/LYRM7"/>
</dbReference>
<dbReference type="PANTHER" id="PTHR46749">
    <property type="entry name" value="COMPLEX III ASSEMBLY FACTOR LYRM7"/>
    <property type="match status" value="1"/>
</dbReference>
<dbReference type="PANTHER" id="PTHR46749:SF1">
    <property type="entry name" value="COMPLEX III ASSEMBLY FACTOR LYRM7"/>
    <property type="match status" value="1"/>
</dbReference>
<sequence length="124" mass="13748">MAATPVPTALGAYRLLLRATRIAFHGDFTTLHAARAEARKQFDQHRELGVDTPMRIQHAVETAEILRTNVVQGIKVSDAGEDTDRYELRIHEHIERGDNDTIKTAGKNKKVKVAVGKTCSNTQS</sequence>
<feature type="transit peptide" description="Mitochondrion" evidence="2">
    <location>
        <begin position="1"/>
        <end status="unknown"/>
    </location>
</feature>
<feature type="chain" id="PRO_0000405477" description="Mitochondrial zinc maintenance protein 1, mitochondrial">
    <location>
        <begin status="unknown"/>
        <end position="124"/>
    </location>
</feature>
<evidence type="ECO:0000250" key="1"/>
<evidence type="ECO:0000255" key="2"/>
<evidence type="ECO:0000305" key="3"/>
<name>MZM1_AJEDR</name>